<keyword id="KW-0067">ATP-binding</keyword>
<keyword id="KW-0963">Cytoplasm</keyword>
<keyword id="KW-0227">DNA damage</keyword>
<keyword id="KW-0233">DNA recombination</keyword>
<keyword id="KW-0234">DNA repair</keyword>
<keyword id="KW-0238">DNA-binding</keyword>
<keyword id="KW-0547">Nucleotide-binding</keyword>
<keyword id="KW-0742">SOS response</keyword>
<sequence length="347" mass="37710">MAIDEDKQKAISLAIKQIDKVFGKGALVRLGDKQVEKIDSISTGSLGLDLALGIGGVPKGRIIEIYGPESSGKTTLSLHIIAECQKNGGVCAFIDAEHALDVHYAKRLGVDTENLLVSQPDTGEQALEILETITRSGGIDLVVVDSVAALTPKAEIDGDMGDQHVGLQARLMSHALRKITGVLHKMNTTLIFINQIRMKIGMMGYGSPETTTGGNALKFYASVRIDIRRIAALKQNEQHIGNRAKVKVVKNKVAPPFREAEFDIMFGEGISKEGEIIDYGVKLDIVDKSGAWLSYQDKKLGQGRENAKALLKEDKALANEIILKIKESIGSNEEIMPLPDEPLEEME</sequence>
<feature type="chain" id="PRO_1000047931" description="Protein RecA">
    <location>
        <begin position="1"/>
        <end position="347"/>
    </location>
</feature>
<feature type="binding site" evidence="1">
    <location>
        <begin position="67"/>
        <end position="74"/>
    </location>
    <ligand>
        <name>ATP</name>
        <dbReference type="ChEBI" id="CHEBI:30616"/>
    </ligand>
</feature>
<dbReference type="EMBL" id="AM260522">
    <property type="protein sequence ID" value="CAJ99175.1"/>
    <property type="molecule type" value="Genomic_DNA"/>
</dbReference>
<dbReference type="RefSeq" id="WP_011577290.1">
    <property type="nucleotide sequence ID" value="NC_008229.1"/>
</dbReference>
<dbReference type="SMR" id="Q17YV1"/>
<dbReference type="STRING" id="382638.Hac_0336"/>
<dbReference type="GeneID" id="31757847"/>
<dbReference type="KEGG" id="hac:Hac_0336"/>
<dbReference type="eggNOG" id="COG0468">
    <property type="taxonomic scope" value="Bacteria"/>
</dbReference>
<dbReference type="HOGENOM" id="CLU_040469_3_2_7"/>
<dbReference type="OrthoDB" id="9776733at2"/>
<dbReference type="BioCyc" id="HACI382638:HAC_RS01505-MONOMER"/>
<dbReference type="Proteomes" id="UP000000775">
    <property type="component" value="Chromosome"/>
</dbReference>
<dbReference type="GO" id="GO:0005829">
    <property type="term" value="C:cytosol"/>
    <property type="evidence" value="ECO:0007669"/>
    <property type="project" value="TreeGrafter"/>
</dbReference>
<dbReference type="GO" id="GO:0005524">
    <property type="term" value="F:ATP binding"/>
    <property type="evidence" value="ECO:0007669"/>
    <property type="project" value="UniProtKB-UniRule"/>
</dbReference>
<dbReference type="GO" id="GO:0016887">
    <property type="term" value="F:ATP hydrolysis activity"/>
    <property type="evidence" value="ECO:0007669"/>
    <property type="project" value="InterPro"/>
</dbReference>
<dbReference type="GO" id="GO:0140664">
    <property type="term" value="F:ATP-dependent DNA damage sensor activity"/>
    <property type="evidence" value="ECO:0007669"/>
    <property type="project" value="InterPro"/>
</dbReference>
<dbReference type="GO" id="GO:0003684">
    <property type="term" value="F:damaged DNA binding"/>
    <property type="evidence" value="ECO:0007669"/>
    <property type="project" value="UniProtKB-UniRule"/>
</dbReference>
<dbReference type="GO" id="GO:0003697">
    <property type="term" value="F:single-stranded DNA binding"/>
    <property type="evidence" value="ECO:0007669"/>
    <property type="project" value="UniProtKB-UniRule"/>
</dbReference>
<dbReference type="GO" id="GO:0006310">
    <property type="term" value="P:DNA recombination"/>
    <property type="evidence" value="ECO:0007669"/>
    <property type="project" value="UniProtKB-UniRule"/>
</dbReference>
<dbReference type="GO" id="GO:0006281">
    <property type="term" value="P:DNA repair"/>
    <property type="evidence" value="ECO:0007669"/>
    <property type="project" value="UniProtKB-UniRule"/>
</dbReference>
<dbReference type="GO" id="GO:0009432">
    <property type="term" value="P:SOS response"/>
    <property type="evidence" value="ECO:0007669"/>
    <property type="project" value="UniProtKB-UniRule"/>
</dbReference>
<dbReference type="CDD" id="cd00983">
    <property type="entry name" value="RecA"/>
    <property type="match status" value="1"/>
</dbReference>
<dbReference type="FunFam" id="3.40.50.300:FF:000087">
    <property type="entry name" value="Recombinase RecA"/>
    <property type="match status" value="1"/>
</dbReference>
<dbReference type="Gene3D" id="3.40.50.300">
    <property type="entry name" value="P-loop containing nucleotide triphosphate hydrolases"/>
    <property type="match status" value="1"/>
</dbReference>
<dbReference type="HAMAP" id="MF_00268">
    <property type="entry name" value="RecA"/>
    <property type="match status" value="1"/>
</dbReference>
<dbReference type="InterPro" id="IPR003593">
    <property type="entry name" value="AAA+_ATPase"/>
</dbReference>
<dbReference type="InterPro" id="IPR013765">
    <property type="entry name" value="DNA_recomb/repair_RecA"/>
</dbReference>
<dbReference type="InterPro" id="IPR020584">
    <property type="entry name" value="DNA_recomb/repair_RecA_CS"/>
</dbReference>
<dbReference type="InterPro" id="IPR027417">
    <property type="entry name" value="P-loop_NTPase"/>
</dbReference>
<dbReference type="InterPro" id="IPR049261">
    <property type="entry name" value="RecA-like_C"/>
</dbReference>
<dbReference type="InterPro" id="IPR049428">
    <property type="entry name" value="RecA-like_N"/>
</dbReference>
<dbReference type="InterPro" id="IPR020588">
    <property type="entry name" value="RecA_ATP-bd"/>
</dbReference>
<dbReference type="InterPro" id="IPR023400">
    <property type="entry name" value="RecA_C_sf"/>
</dbReference>
<dbReference type="InterPro" id="IPR020587">
    <property type="entry name" value="RecA_monomer-monomer_interface"/>
</dbReference>
<dbReference type="NCBIfam" id="TIGR02012">
    <property type="entry name" value="tigrfam_recA"/>
    <property type="match status" value="1"/>
</dbReference>
<dbReference type="PANTHER" id="PTHR45900:SF1">
    <property type="entry name" value="MITOCHONDRIAL DNA REPAIR PROTEIN RECA HOMOLOG-RELATED"/>
    <property type="match status" value="1"/>
</dbReference>
<dbReference type="PANTHER" id="PTHR45900">
    <property type="entry name" value="RECA"/>
    <property type="match status" value="1"/>
</dbReference>
<dbReference type="Pfam" id="PF00154">
    <property type="entry name" value="RecA"/>
    <property type="match status" value="1"/>
</dbReference>
<dbReference type="Pfam" id="PF21096">
    <property type="entry name" value="RecA_C"/>
    <property type="match status" value="1"/>
</dbReference>
<dbReference type="PRINTS" id="PR00142">
    <property type="entry name" value="RECA"/>
</dbReference>
<dbReference type="SMART" id="SM00382">
    <property type="entry name" value="AAA"/>
    <property type="match status" value="1"/>
</dbReference>
<dbReference type="SUPFAM" id="SSF52540">
    <property type="entry name" value="P-loop containing nucleoside triphosphate hydrolases"/>
    <property type="match status" value="1"/>
</dbReference>
<dbReference type="SUPFAM" id="SSF54752">
    <property type="entry name" value="RecA protein, C-terminal domain"/>
    <property type="match status" value="1"/>
</dbReference>
<dbReference type="PROSITE" id="PS00321">
    <property type="entry name" value="RECA_1"/>
    <property type="match status" value="1"/>
</dbReference>
<dbReference type="PROSITE" id="PS50162">
    <property type="entry name" value="RECA_2"/>
    <property type="match status" value="1"/>
</dbReference>
<dbReference type="PROSITE" id="PS50163">
    <property type="entry name" value="RECA_3"/>
    <property type="match status" value="1"/>
</dbReference>
<accession>Q17YV1</accession>
<comment type="function">
    <text evidence="1">Can catalyze the hydrolysis of ATP in the presence of single-stranded DNA, the ATP-dependent uptake of single-stranded DNA by duplex DNA, and the ATP-dependent hybridization of homologous single-stranded DNAs. It interacts with LexA causing its activation and leading to its autocatalytic cleavage.</text>
</comment>
<comment type="subcellular location">
    <subcellularLocation>
        <location evidence="1">Cytoplasm</location>
    </subcellularLocation>
</comment>
<comment type="similarity">
    <text evidence="1">Belongs to the RecA family.</text>
</comment>
<gene>
    <name evidence="1" type="primary">recA</name>
    <name type="ordered locus">Hac_0336</name>
</gene>
<protein>
    <recommendedName>
        <fullName evidence="1">Protein RecA</fullName>
    </recommendedName>
    <alternativeName>
        <fullName evidence="1">Recombinase A</fullName>
    </alternativeName>
</protein>
<evidence type="ECO:0000255" key="1">
    <source>
        <dbReference type="HAMAP-Rule" id="MF_00268"/>
    </source>
</evidence>
<organism>
    <name type="scientific">Helicobacter acinonychis (strain Sheeba)</name>
    <dbReference type="NCBI Taxonomy" id="382638"/>
    <lineage>
        <taxon>Bacteria</taxon>
        <taxon>Pseudomonadati</taxon>
        <taxon>Campylobacterota</taxon>
        <taxon>Epsilonproteobacteria</taxon>
        <taxon>Campylobacterales</taxon>
        <taxon>Helicobacteraceae</taxon>
        <taxon>Helicobacter</taxon>
    </lineage>
</organism>
<name>RECA_HELAH</name>
<reference key="1">
    <citation type="journal article" date="2006" name="PLoS Genet.">
        <title>Who ate whom? Adaptive Helicobacter genomic changes that accompanied a host jump from early humans to large felines.</title>
        <authorList>
            <person name="Eppinger M."/>
            <person name="Baar C."/>
            <person name="Linz B."/>
            <person name="Raddatz G."/>
            <person name="Lanz C."/>
            <person name="Keller H."/>
            <person name="Morelli G."/>
            <person name="Gressmann H."/>
            <person name="Achtman M."/>
            <person name="Schuster S.C."/>
        </authorList>
    </citation>
    <scope>NUCLEOTIDE SEQUENCE [LARGE SCALE GENOMIC DNA]</scope>
    <source>
        <strain>Sheeba</strain>
    </source>
</reference>
<proteinExistence type="inferred from homology"/>